<keyword id="KW-0002">3D-structure</keyword>
<keyword id="KW-1185">Reference proteome</keyword>
<keyword id="KW-0808">Transferase</keyword>
<gene>
    <name evidence="4" type="ordered locus">Rv3272</name>
</gene>
<accession>P96877</accession>
<accession>F2GKU5</accession>
<accession>I6Y327</accession>
<accession>Q7D5S7</accession>
<name>COATR_MYCTU</name>
<proteinExistence type="evidence at protein level"/>
<sequence length="394" mass="42459">MPTSNPAKPLDGFRVLDFTQNVAGPLAGQVLVDLGAEVIKVEAPGGEAARQITSVLPGRPPLATYFLPNNRGKKSVTVDLTTEQAKQQMLRLADTADVVLEAFRPGTMEKLGLGPDDLRSRNPNLIYARLTAYGGNGPHGSRPGIDLVVAAEAGMTTGMPTPEGKPQIIPFQLVDNASGHVLAQAVLAALLHRERNGVADVVQVAMYDVAVGLQANQLMMHLNRAASDQPKPEPAPKAKRRKGVGFATQPSDAFRTADGYIVISAYVPKHWQKLCYLIGRPDLVEDQRFAEQRSRSINYAELTAELELALASKTATEWVQLLQANGLMACLAHTWKQVVDTPLFAENDLTLEVGRGADTITVIRTPARYASFRAVVTDPPPTAGEHNAVFLARP</sequence>
<evidence type="ECO:0000269" key="1">
    <source>
    </source>
</evidence>
<evidence type="ECO:0000305" key="2"/>
<evidence type="ECO:0000305" key="3">
    <source>
    </source>
</evidence>
<evidence type="ECO:0000312" key="4">
    <source>
        <dbReference type="EMBL" id="CCP46091.1"/>
    </source>
</evidence>
<evidence type="ECO:0007744" key="5">
    <source>
        <dbReference type="PDB" id="5YIT"/>
    </source>
</evidence>
<evidence type="ECO:0007744" key="6">
    <source>
        <dbReference type="PDB" id="5YIY"/>
    </source>
</evidence>
<evidence type="ECO:0007744" key="7">
    <source>
        <dbReference type="PDB" id="5YX6"/>
    </source>
</evidence>
<evidence type="ECO:0007829" key="8">
    <source>
        <dbReference type="PDB" id="5YIY"/>
    </source>
</evidence>
<evidence type="ECO:0007829" key="9">
    <source>
        <dbReference type="PDB" id="5YX6"/>
    </source>
</evidence>
<dbReference type="EC" id="2.8.3.-" evidence="3"/>
<dbReference type="EMBL" id="AL123456">
    <property type="protein sequence ID" value="CCP46091.1"/>
    <property type="molecule type" value="Genomic_DNA"/>
</dbReference>
<dbReference type="RefSeq" id="NP_217789.1">
    <property type="nucleotide sequence ID" value="NC_000962.3"/>
</dbReference>
<dbReference type="RefSeq" id="WP_003417120.1">
    <property type="nucleotide sequence ID" value="NZ_NVQJ01000003.1"/>
</dbReference>
<dbReference type="PDB" id="5YIT">
    <property type="method" value="X-ray"/>
    <property type="resolution" value="2.79 A"/>
    <property type="chains" value="A/B/C/D/E=1-394"/>
</dbReference>
<dbReference type="PDB" id="5YIY">
    <property type="method" value="X-ray"/>
    <property type="resolution" value="2.50 A"/>
    <property type="chains" value="A/B=1-394"/>
</dbReference>
<dbReference type="PDB" id="5YX6">
    <property type="method" value="X-ray"/>
    <property type="resolution" value="2.20 A"/>
    <property type="chains" value="A/B/C/D=1-394"/>
</dbReference>
<dbReference type="PDBsum" id="5YIT"/>
<dbReference type="PDBsum" id="5YIY"/>
<dbReference type="PDBsum" id="5YX6"/>
<dbReference type="SMR" id="P96877"/>
<dbReference type="FunCoup" id="P96877">
    <property type="interactions" value="107"/>
</dbReference>
<dbReference type="STRING" id="83332.Rv3272"/>
<dbReference type="PaxDb" id="83332-Rv3272"/>
<dbReference type="DNASU" id="888702"/>
<dbReference type="GeneID" id="888702"/>
<dbReference type="KEGG" id="mtu:Rv3272"/>
<dbReference type="KEGG" id="mtv:RVBD_3272"/>
<dbReference type="PATRIC" id="fig|83332.111.peg.3654"/>
<dbReference type="TubercuList" id="Rv3272"/>
<dbReference type="eggNOG" id="COG1804">
    <property type="taxonomic scope" value="Bacteria"/>
</dbReference>
<dbReference type="InParanoid" id="P96877"/>
<dbReference type="OrthoDB" id="9797653at2"/>
<dbReference type="PhylomeDB" id="P96877"/>
<dbReference type="Proteomes" id="UP000001584">
    <property type="component" value="Chromosome"/>
</dbReference>
<dbReference type="GO" id="GO:0016740">
    <property type="term" value="F:transferase activity"/>
    <property type="evidence" value="ECO:0007669"/>
    <property type="project" value="UniProtKB-KW"/>
</dbReference>
<dbReference type="Gene3D" id="3.40.50.10540">
    <property type="entry name" value="Crotonobetainyl-coa:carnitine coa-transferase, domain 1"/>
    <property type="match status" value="1"/>
</dbReference>
<dbReference type="Gene3D" id="3.30.1540.10">
    <property type="entry name" value="formyl-coa transferase, domain 3"/>
    <property type="match status" value="1"/>
</dbReference>
<dbReference type="InterPro" id="IPR050483">
    <property type="entry name" value="CoA-transferase_III_domain"/>
</dbReference>
<dbReference type="InterPro" id="IPR003673">
    <property type="entry name" value="CoA-Trfase_fam_III"/>
</dbReference>
<dbReference type="InterPro" id="IPR044855">
    <property type="entry name" value="CoA-Trfase_III_dom3_sf"/>
</dbReference>
<dbReference type="InterPro" id="IPR023606">
    <property type="entry name" value="CoA-Trfase_III_dom_1_sf"/>
</dbReference>
<dbReference type="PANTHER" id="PTHR48207:SF4">
    <property type="entry name" value="BLL6097 PROTEIN"/>
    <property type="match status" value="1"/>
</dbReference>
<dbReference type="PANTHER" id="PTHR48207">
    <property type="entry name" value="SUCCINATE--HYDROXYMETHYLGLUTARATE COA-TRANSFERASE"/>
    <property type="match status" value="1"/>
</dbReference>
<dbReference type="Pfam" id="PF02515">
    <property type="entry name" value="CoA_transf_3"/>
    <property type="match status" value="1"/>
</dbReference>
<dbReference type="SUPFAM" id="SSF89796">
    <property type="entry name" value="CoA-transferase family III (CaiB/BaiF)"/>
    <property type="match status" value="1"/>
</dbReference>
<feature type="chain" id="PRO_0000447345" description="Probable fatty acyl-CoA transferase Rv3272">
    <location>
        <begin position="1"/>
        <end position="394"/>
    </location>
</feature>
<feature type="active site" description="Nucleophile" evidence="3">
    <location>
        <position position="175"/>
    </location>
</feature>
<feature type="turn" evidence="9">
    <location>
        <begin position="9"/>
        <end position="12"/>
    </location>
</feature>
<feature type="strand" evidence="9">
    <location>
        <begin position="14"/>
        <end position="17"/>
    </location>
</feature>
<feature type="helix" evidence="9">
    <location>
        <begin position="23"/>
        <end position="33"/>
    </location>
</feature>
<feature type="strand" evidence="9">
    <location>
        <begin position="37"/>
        <end position="42"/>
    </location>
</feature>
<feature type="helix" evidence="9">
    <location>
        <begin position="48"/>
        <end position="50"/>
    </location>
</feature>
<feature type="strand" evidence="9">
    <location>
        <begin position="54"/>
        <end position="56"/>
    </location>
</feature>
<feature type="strand" evidence="9">
    <location>
        <begin position="59"/>
        <end position="62"/>
    </location>
</feature>
<feature type="turn" evidence="9">
    <location>
        <begin position="64"/>
        <end position="66"/>
    </location>
</feature>
<feature type="helix" evidence="9">
    <location>
        <begin position="67"/>
        <end position="69"/>
    </location>
</feature>
<feature type="strand" evidence="9">
    <location>
        <begin position="74"/>
        <end position="77"/>
    </location>
</feature>
<feature type="helix" evidence="9">
    <location>
        <begin position="83"/>
        <end position="94"/>
    </location>
</feature>
<feature type="strand" evidence="9">
    <location>
        <begin position="97"/>
        <end position="101"/>
    </location>
</feature>
<feature type="helix" evidence="9">
    <location>
        <begin position="107"/>
        <end position="110"/>
    </location>
</feature>
<feature type="helix" evidence="9">
    <location>
        <begin position="115"/>
        <end position="121"/>
    </location>
</feature>
<feature type="strand" evidence="9">
    <location>
        <begin position="126"/>
        <end position="133"/>
    </location>
</feature>
<feature type="strand" evidence="9">
    <location>
        <begin position="135"/>
        <end position="138"/>
    </location>
</feature>
<feature type="helix" evidence="9">
    <location>
        <begin position="146"/>
        <end position="152"/>
    </location>
</feature>
<feature type="turn" evidence="9">
    <location>
        <begin position="153"/>
        <end position="158"/>
    </location>
</feature>
<feature type="strand" evidence="8">
    <location>
        <begin position="162"/>
        <end position="165"/>
    </location>
</feature>
<feature type="helix" evidence="9">
    <location>
        <begin position="173"/>
        <end position="196"/>
    </location>
</feature>
<feature type="strand" evidence="9">
    <location>
        <begin position="201"/>
        <end position="205"/>
    </location>
</feature>
<feature type="helix" evidence="9">
    <location>
        <begin position="206"/>
        <end position="213"/>
    </location>
</feature>
<feature type="helix" evidence="9">
    <location>
        <begin position="215"/>
        <end position="222"/>
    </location>
</feature>
<feature type="strand" evidence="9">
    <location>
        <begin position="250"/>
        <end position="255"/>
    </location>
</feature>
<feature type="strand" evidence="9">
    <location>
        <begin position="257"/>
        <end position="264"/>
    </location>
</feature>
<feature type="helix" evidence="9">
    <location>
        <begin position="268"/>
        <end position="277"/>
    </location>
</feature>
<feature type="helix" evidence="9">
    <location>
        <begin position="282"/>
        <end position="285"/>
    </location>
</feature>
<feature type="turn" evidence="9">
    <location>
        <begin position="287"/>
        <end position="289"/>
    </location>
</feature>
<feature type="helix" evidence="9">
    <location>
        <begin position="292"/>
        <end position="297"/>
    </location>
</feature>
<feature type="helix" evidence="9">
    <location>
        <begin position="299"/>
        <end position="310"/>
    </location>
</feature>
<feature type="helix" evidence="9">
    <location>
        <begin position="315"/>
        <end position="324"/>
    </location>
</feature>
<feature type="strand" evidence="9">
    <location>
        <begin position="328"/>
        <end position="331"/>
    </location>
</feature>
<feature type="helix" evidence="9">
    <location>
        <begin position="335"/>
        <end position="338"/>
    </location>
</feature>
<feature type="helix" evidence="9">
    <location>
        <begin position="342"/>
        <end position="346"/>
    </location>
</feature>
<feature type="strand" evidence="9">
    <location>
        <begin position="350"/>
        <end position="353"/>
    </location>
</feature>
<feature type="strand" evidence="9">
    <location>
        <begin position="355"/>
        <end position="358"/>
    </location>
</feature>
<feature type="strand" evidence="9">
    <location>
        <begin position="360"/>
        <end position="363"/>
    </location>
</feature>
<feature type="strand" evidence="9">
    <location>
        <begin position="368"/>
        <end position="372"/>
    </location>
</feature>
<feature type="turn" evidence="9">
    <location>
        <begin position="383"/>
        <end position="386"/>
    </location>
</feature>
<feature type="helix" evidence="9">
    <location>
        <begin position="387"/>
        <end position="390"/>
    </location>
</feature>
<comment type="function">
    <text evidence="1">Probably involved in fatty acid metabolism. Binds to fatty acyl-CoAs of varying carbon chain lengths, with the highest binding affinity for palmitoyl-CoA (C16:0). In vitro, alters the cell wall lipid profile and protects mycobacteria from acidic, oxidative and antibiotic stress. May play a significant role in host-pathogen interaction.</text>
</comment>
<comment type="subunit">
    <text evidence="1">Homodimer.</text>
</comment>
<comment type="domain">
    <text evidence="1">Consists of a large Rossmann fold domain and a small domain, which are connected by a flexible linker.</text>
</comment>
<comment type="similarity">
    <text evidence="2">Belongs to the CoA-transferase III family.</text>
</comment>
<organism>
    <name type="scientific">Mycobacterium tuberculosis (strain ATCC 25618 / H37Rv)</name>
    <dbReference type="NCBI Taxonomy" id="83332"/>
    <lineage>
        <taxon>Bacteria</taxon>
        <taxon>Bacillati</taxon>
        <taxon>Actinomycetota</taxon>
        <taxon>Actinomycetes</taxon>
        <taxon>Mycobacteriales</taxon>
        <taxon>Mycobacteriaceae</taxon>
        <taxon>Mycobacterium</taxon>
        <taxon>Mycobacterium tuberculosis complex</taxon>
    </lineage>
</organism>
<protein>
    <recommendedName>
        <fullName evidence="2">Probable fatty acyl-CoA transferase Rv3272</fullName>
        <ecNumber evidence="3">2.8.3.-</ecNumber>
    </recommendedName>
</protein>
<reference key="1">
    <citation type="journal article" date="1998" name="Nature">
        <title>Deciphering the biology of Mycobacterium tuberculosis from the complete genome sequence.</title>
        <authorList>
            <person name="Cole S.T."/>
            <person name="Brosch R."/>
            <person name="Parkhill J."/>
            <person name="Garnier T."/>
            <person name="Churcher C.M."/>
            <person name="Harris D.E."/>
            <person name="Gordon S.V."/>
            <person name="Eiglmeier K."/>
            <person name="Gas S."/>
            <person name="Barry C.E. III"/>
            <person name="Tekaia F."/>
            <person name="Badcock K."/>
            <person name="Basham D."/>
            <person name="Brown D."/>
            <person name="Chillingworth T."/>
            <person name="Connor R."/>
            <person name="Davies R.M."/>
            <person name="Devlin K."/>
            <person name="Feltwell T."/>
            <person name="Gentles S."/>
            <person name="Hamlin N."/>
            <person name="Holroyd S."/>
            <person name="Hornsby T."/>
            <person name="Jagels K."/>
            <person name="Krogh A."/>
            <person name="McLean J."/>
            <person name="Moule S."/>
            <person name="Murphy L.D."/>
            <person name="Oliver S."/>
            <person name="Osborne J."/>
            <person name="Quail M.A."/>
            <person name="Rajandream M.A."/>
            <person name="Rogers J."/>
            <person name="Rutter S."/>
            <person name="Seeger K."/>
            <person name="Skelton S."/>
            <person name="Squares S."/>
            <person name="Squares R."/>
            <person name="Sulston J.E."/>
            <person name="Taylor K."/>
            <person name="Whitehead S."/>
            <person name="Barrell B.G."/>
        </authorList>
    </citation>
    <scope>NUCLEOTIDE SEQUENCE [LARGE SCALE GENOMIC DNA]</scope>
    <source>
        <strain>ATCC 25618 / H37Rv</strain>
    </source>
</reference>
<reference key="2">
    <citation type="journal article" date="2011" name="Mol. Cell. Proteomics">
        <title>Proteogenomic analysis of Mycobacterium tuberculosis by high resolution mass spectrometry.</title>
        <authorList>
            <person name="Kelkar D.S."/>
            <person name="Kumar D."/>
            <person name="Kumar P."/>
            <person name="Balakrishnan L."/>
            <person name="Muthusamy B."/>
            <person name="Yadav A.K."/>
            <person name="Shrivastava P."/>
            <person name="Marimuthu A."/>
            <person name="Anand S."/>
            <person name="Sundaram H."/>
            <person name="Kingsbury R."/>
            <person name="Harsha H.C."/>
            <person name="Nair B."/>
            <person name="Prasad T.S."/>
            <person name="Chauhan D.S."/>
            <person name="Katoch K."/>
            <person name="Katoch V.M."/>
            <person name="Kumar P."/>
            <person name="Chaerkady R."/>
            <person name="Ramachandran S."/>
            <person name="Dash D."/>
            <person name="Pandey A."/>
        </authorList>
    </citation>
    <scope>IDENTIFICATION BY MASS SPECTROMETRY [LARGE SCALE ANALYSIS]</scope>
</reference>
<reference evidence="5 6 7" key="3">
    <citation type="journal article" date="2019" name="Biochim. Biophys. Acta">
        <title>Rv3272 encodes a novel family III CoA transferase that alters the cell wall lipid profile and protects mycobacteria from acidic and oxidative stress.</title>
        <authorList>
            <person name="Karade S.S."/>
            <person name="Pandey S."/>
            <person name="Ansari A."/>
            <person name="Das S."/>
            <person name="Tripathi S."/>
            <person name="Arora A."/>
            <person name="Chopra S."/>
            <person name="Pratap J.V."/>
            <person name="Dasgupta A."/>
        </authorList>
    </citation>
    <scope>X-RAY CRYSTALLOGRAPHY (2.20 ANGSTROMS) OF WILD-TYPE AND OF MUTANT ALA-175</scope>
    <scope>FUNCTION</scope>
    <scope>SUBUNIT</scope>
    <scope>DOMAIN</scope>
    <scope>ACTIVE SITE</scope>
    <source>
        <strain>H37Rv</strain>
    </source>
</reference>